<comment type="function">
    <text evidence="4 7">Binds to actin filaments in muscle and non-muscle cells. Plays a central role, in association with the troponin complex, in the calcium dependent regulation of vertebrate striated muscle contraction. Smooth muscle contraction is regulated by interaction with caldesmon. In non-muscle cells is implicated in stabilizing cytoskeleton actin filaments.</text>
</comment>
<comment type="subunit">
    <text evidence="3">Homodimer. Heterodimer of an alpha (TPM1, TPM3 or TPM4) and a beta (TPM2) chain.</text>
</comment>
<comment type="subcellular location">
    <subcellularLocation>
        <location evidence="3">Cytoplasm</location>
        <location evidence="3">Cytoskeleton</location>
    </subcellularLocation>
    <text evidence="3">Associates with F-actin stress fibers.</text>
</comment>
<comment type="domain">
    <text evidence="8">The molecule is in a coiled coil structure that is formed by 2 polypeptide chains. The sequence exhibits a prominent seven-residues periodicity.</text>
</comment>
<comment type="mass spectrometry" mass="32781.0" method="MALDI" evidence="7"/>
<comment type="similarity">
    <text evidence="5">Belongs to the tropomyosin family.</text>
</comment>
<accession>P84335</accession>
<evidence type="ECO:0000250" key="1"/>
<evidence type="ECO:0000250" key="2">
    <source>
        <dbReference type="UniProtKB" id="P04268"/>
    </source>
</evidence>
<evidence type="ECO:0000250" key="3">
    <source>
        <dbReference type="UniProtKB" id="P04692"/>
    </source>
</evidence>
<evidence type="ECO:0000250" key="4">
    <source>
        <dbReference type="UniProtKB" id="P09493"/>
    </source>
</evidence>
<evidence type="ECO:0000255" key="5"/>
<evidence type="ECO:0000256" key="6">
    <source>
        <dbReference type="SAM" id="MobiDB-lite"/>
    </source>
</evidence>
<evidence type="ECO:0000269" key="7">
    <source ref="1"/>
</evidence>
<evidence type="ECO:0000305" key="8"/>
<name>TPM1_CHEAU</name>
<keyword id="KW-0007">Acetylation</keyword>
<keyword id="KW-0009">Actin-binding</keyword>
<keyword id="KW-0175">Coiled coil</keyword>
<keyword id="KW-0963">Cytoplasm</keyword>
<keyword id="KW-0206">Cytoskeleton</keyword>
<keyword id="KW-0903">Direct protein sequencing</keyword>
<keyword id="KW-0514">Muscle protein</keyword>
<reference evidence="8" key="1">
    <citation type="thesis" date="2004" institute="ISBM" country="Tunisia">
        <title>Characterization of tropomyosin of Liza aurata.</title>
        <authorList>
            <person name="Ghedira R."/>
        </authorList>
    </citation>
    <scope>PROTEIN SEQUENCE</scope>
    <scope>FUNCTION</scope>
    <scope>MASS SPECTROMETRY</scope>
    <source>
        <tissue evidence="7">Skeletal muscle</tissue>
    </source>
</reference>
<proteinExistence type="evidence at protein level"/>
<protein>
    <recommendedName>
        <fullName>Tropomyosin alpha-1 chain</fullName>
    </recommendedName>
    <alternativeName>
        <fullName>Alpha-tropomyosin</fullName>
    </alternativeName>
    <alternativeName>
        <fullName>Tropomyosin-1</fullName>
    </alternativeName>
</protein>
<sequence length="284" mass="32730">MDAIKKKMQMLKLDKENALDRAEQAESDKKASEDRSKQLEDDLVALQKKLKGTEDELDKYSEALKDAQEKLELAEKKATDAEGDVASLNRRIQLVEEELDRAQERLATALTKLEEAEKAADESERGMKVIENRAMKDEEKMELQEIQLKEAKHIAEEADRKYEEVARKLVIIEGDLERTEERAELSESKCSELEEELKTVTNNLKSLEAQAEKYSQKEDKYEEEIKVLTDKLKEAETRAEFAERSVAKLEKTIDDLEDELYAQKLKYKAISEELDHALNDMTSI</sequence>
<dbReference type="SMR" id="P84335"/>
<dbReference type="GO" id="GO:0015629">
    <property type="term" value="C:actin cytoskeleton"/>
    <property type="evidence" value="ECO:0000250"/>
    <property type="project" value="UniProtKB"/>
</dbReference>
<dbReference type="GO" id="GO:0005737">
    <property type="term" value="C:cytoplasm"/>
    <property type="evidence" value="ECO:0007669"/>
    <property type="project" value="UniProtKB-KW"/>
</dbReference>
<dbReference type="GO" id="GO:0051015">
    <property type="term" value="F:actin filament binding"/>
    <property type="evidence" value="ECO:0000250"/>
    <property type="project" value="UniProtKB"/>
</dbReference>
<dbReference type="GO" id="GO:0042802">
    <property type="term" value="F:identical protein binding"/>
    <property type="evidence" value="ECO:0000250"/>
    <property type="project" value="UniProtKB"/>
</dbReference>
<dbReference type="GO" id="GO:0046982">
    <property type="term" value="F:protein heterodimerization activity"/>
    <property type="evidence" value="ECO:0000250"/>
    <property type="project" value="UniProtKB"/>
</dbReference>
<dbReference type="GO" id="GO:0042803">
    <property type="term" value="F:protein homodimerization activity"/>
    <property type="evidence" value="ECO:0000250"/>
    <property type="project" value="UniProtKB"/>
</dbReference>
<dbReference type="FunFam" id="1.20.5.1160:FF:000013">
    <property type="entry name" value="Tropomyosin 1 (alpha)"/>
    <property type="match status" value="1"/>
</dbReference>
<dbReference type="FunFam" id="1.20.5.170:FF:000005">
    <property type="entry name" value="Tropomyosin alpha-1 chain"/>
    <property type="match status" value="1"/>
</dbReference>
<dbReference type="FunFam" id="1.20.5.170:FF:000001">
    <property type="entry name" value="Tropomyosin alpha-1 chain isoform 1"/>
    <property type="match status" value="1"/>
</dbReference>
<dbReference type="FunFam" id="1.20.5.340:FF:000001">
    <property type="entry name" value="Tropomyosin alpha-1 chain isoform 2"/>
    <property type="match status" value="1"/>
</dbReference>
<dbReference type="Gene3D" id="1.20.5.170">
    <property type="match status" value="2"/>
</dbReference>
<dbReference type="Gene3D" id="1.20.5.340">
    <property type="match status" value="1"/>
</dbReference>
<dbReference type="InterPro" id="IPR000533">
    <property type="entry name" value="Tropomyosin"/>
</dbReference>
<dbReference type="PANTHER" id="PTHR19269">
    <property type="entry name" value="TROPOMYOSIN"/>
    <property type="match status" value="1"/>
</dbReference>
<dbReference type="Pfam" id="PF00261">
    <property type="entry name" value="Tropomyosin"/>
    <property type="match status" value="1"/>
</dbReference>
<dbReference type="PRINTS" id="PR00194">
    <property type="entry name" value="TROPOMYOSIN"/>
</dbReference>
<dbReference type="SUPFAM" id="SSF57997">
    <property type="entry name" value="Tropomyosin"/>
    <property type="match status" value="1"/>
</dbReference>
<dbReference type="PROSITE" id="PS00326">
    <property type="entry name" value="TROPOMYOSIN"/>
    <property type="match status" value="1"/>
</dbReference>
<feature type="chain" id="PRO_0000205640" description="Tropomyosin alpha-1 chain">
    <location>
        <begin position="1"/>
        <end position="284"/>
    </location>
</feature>
<feature type="region of interest" description="Disordered" evidence="6">
    <location>
        <begin position="1"/>
        <end position="40"/>
    </location>
</feature>
<feature type="coiled-coil region" evidence="1">
    <location>
        <begin position="1"/>
        <end position="284"/>
    </location>
</feature>
<feature type="compositionally biased region" description="Basic and acidic residues" evidence="6">
    <location>
        <begin position="12"/>
        <end position="40"/>
    </location>
</feature>
<feature type="modified residue" description="N-acetylmethionine" evidence="2">
    <location>
        <position position="1"/>
    </location>
</feature>
<organism>
    <name type="scientific">Chelon auratus</name>
    <name type="common">Golden grey mullet</name>
    <name type="synonym">Liza aurata</name>
    <dbReference type="NCBI Taxonomy" id="48191"/>
    <lineage>
        <taxon>Eukaryota</taxon>
        <taxon>Metazoa</taxon>
        <taxon>Chordata</taxon>
        <taxon>Craniata</taxon>
        <taxon>Vertebrata</taxon>
        <taxon>Euteleostomi</taxon>
        <taxon>Actinopterygii</taxon>
        <taxon>Neopterygii</taxon>
        <taxon>Teleostei</taxon>
        <taxon>Neoteleostei</taxon>
        <taxon>Acanthomorphata</taxon>
        <taxon>Ovalentaria</taxon>
        <taxon>Mugilomorphae</taxon>
        <taxon>Mugilidae</taxon>
        <taxon>Chelon</taxon>
    </lineage>
</organism>